<comment type="function">
    <text evidence="7">Translation initiation factor that is able to deliver tRNA to the P-site of the eukaryotic ribosome in a GTP-independent manner. The binding of Met-tRNA(I) occurs after the AUG codon finds its position in the P-site of 40S ribosomes, the situation that takes place during initiation complex formation on some specific RNAs. Its activity in tRNA binding with 40S subunits does not require the presence of the aminoacyl moiety. Possesses the unique ability to deliver non-Met (elongator) tRNAs into the P-site of the 40S subunit. In addition to its role in initiation, can promote release of deacylated tRNA and mRNA from recycled 40S subunits following ABCE1-mediated dissociation of post-termination ribosomal complexes into subunits.</text>
</comment>
<comment type="subcellular location">
    <subcellularLocation>
        <location evidence="1">Cytoplasm</location>
    </subcellularLocation>
</comment>
<comment type="similarity">
    <text evidence="8">Belongs to the eIF2D family.</text>
</comment>
<reference key="1">
    <citation type="submission" date="2006-09" db="EMBL/GenBank/DDBJ databases">
        <title>NISC comparative sequencing initiative.</title>
        <authorList>
            <person name="Antonellis A."/>
            <person name="Ayele K."/>
            <person name="Benjamin B."/>
            <person name="Blakesley R.W."/>
            <person name="Boakye A."/>
            <person name="Bouffard G.G."/>
            <person name="Brinkley C."/>
            <person name="Brooks S."/>
            <person name="Chu G."/>
            <person name="Coleman H."/>
            <person name="Engle J."/>
            <person name="Gestole M."/>
            <person name="Greene A."/>
            <person name="Guan X."/>
            <person name="Gupta J."/>
            <person name="Haghighi P."/>
            <person name="Han J."/>
            <person name="Hansen N."/>
            <person name="Ho S.-L."/>
            <person name="Hu P."/>
            <person name="Hunter G."/>
            <person name="Hurle B."/>
            <person name="Idol J.R."/>
            <person name="Kwong P."/>
            <person name="Laric P."/>
            <person name="Larson S."/>
            <person name="Lee-Lin S.-Q."/>
            <person name="Legaspi R."/>
            <person name="Madden M."/>
            <person name="Maduro Q.L."/>
            <person name="Maduro V.B."/>
            <person name="Margulies E.H."/>
            <person name="Masiello C."/>
            <person name="Maskeri B."/>
            <person name="McDowell J."/>
            <person name="Mojidi H.A."/>
            <person name="Mullikin J.C."/>
            <person name="Oestreicher J.S."/>
            <person name="Park M."/>
            <person name="Portnoy M.E."/>
            <person name="Prasad A."/>
            <person name="Puri O."/>
            <person name="Reddix-Dugue N."/>
            <person name="Schandler K."/>
            <person name="Schueler M.G."/>
            <person name="Sison C."/>
            <person name="Stantripop S."/>
            <person name="Stephen E."/>
            <person name="Taye A."/>
            <person name="Thomas J.W."/>
            <person name="Thomas P.J."/>
            <person name="Tsipouri V."/>
            <person name="Ung L."/>
            <person name="Vogt J.L."/>
            <person name="Wetherby K.D."/>
            <person name="Young A."/>
            <person name="Green E.D."/>
        </authorList>
    </citation>
    <scope>NUCLEOTIDE SEQUENCE [LARGE SCALE GENOMIC DNA]</scope>
</reference>
<reference key="2">
    <citation type="journal article" date="2010" name="Genes Dev.">
        <title>Activities of ligatin and MCT-1/DENR in eukaryotic translation initiation and ribosomal recycling.</title>
        <authorList>
            <person name="Skabkin M.A."/>
            <person name="Skabkina O.V."/>
            <person name="Dhote V."/>
            <person name="Komar A.A."/>
            <person name="Hellen C.U."/>
            <person name="Pestova T.V."/>
        </authorList>
    </citation>
    <scope>IDENTIFICATION BY MASS SPECTROMETRY</scope>
    <scope>FUNCTION</scope>
</reference>
<feature type="chain" id="PRO_0000405564" description="Eukaryotic translation initiation factor 2D">
    <location>
        <begin position="1"/>
        <end position="566"/>
    </location>
</feature>
<feature type="domain" description="PUA" evidence="3">
    <location>
        <begin position="93"/>
        <end position="173"/>
    </location>
</feature>
<feature type="domain" description="SWIB/MDM2" evidence="5">
    <location>
        <begin position="365"/>
        <end position="449"/>
    </location>
</feature>
<feature type="domain" description="SUI1" evidence="4">
    <location>
        <begin position="473"/>
        <end position="546"/>
    </location>
</feature>
<feature type="region of interest" description="Disordered" evidence="6">
    <location>
        <begin position="211"/>
        <end position="239"/>
    </location>
</feature>
<feature type="modified residue" description="N-acetylmethionine" evidence="2">
    <location>
        <position position="1"/>
    </location>
</feature>
<feature type="modified residue" description="Phosphoserine" evidence="2">
    <location>
        <position position="343"/>
    </location>
</feature>
<protein>
    <recommendedName>
        <fullName>Eukaryotic translation initiation factor 2D</fullName>
        <shortName>eIF2d</shortName>
    </recommendedName>
    <alternativeName>
        <fullName>Ligatin</fullName>
    </alternativeName>
</protein>
<dbReference type="RefSeq" id="XP_002717595.1">
    <property type="nucleotide sequence ID" value="XM_002717549.5"/>
</dbReference>
<dbReference type="SMR" id="P0CL18"/>
<dbReference type="FunCoup" id="P0CL18">
    <property type="interactions" value="1730"/>
</dbReference>
<dbReference type="STRING" id="9986.ENSOCUP00000013278"/>
<dbReference type="PaxDb" id="9986-ENSOCUP00000013278"/>
<dbReference type="GeneID" id="100345187"/>
<dbReference type="KEGG" id="ocu:100345187"/>
<dbReference type="CTD" id="1939"/>
<dbReference type="eggNOG" id="KOG2522">
    <property type="taxonomic scope" value="Eukaryota"/>
</dbReference>
<dbReference type="HOGENOM" id="CLU_012487_2_0_1"/>
<dbReference type="InParanoid" id="P0CL18"/>
<dbReference type="OMA" id="MFLKPYR"/>
<dbReference type="OrthoDB" id="199771at2759"/>
<dbReference type="TreeFam" id="TF105830"/>
<dbReference type="Proteomes" id="UP000001811">
    <property type="component" value="Unplaced"/>
</dbReference>
<dbReference type="GO" id="GO:0005737">
    <property type="term" value="C:cytoplasm"/>
    <property type="evidence" value="ECO:0007669"/>
    <property type="project" value="UniProtKB-SubCell"/>
</dbReference>
<dbReference type="GO" id="GO:0003723">
    <property type="term" value="F:RNA binding"/>
    <property type="evidence" value="ECO:0007669"/>
    <property type="project" value="InterPro"/>
</dbReference>
<dbReference type="GO" id="GO:0003743">
    <property type="term" value="F:translation initiation factor activity"/>
    <property type="evidence" value="ECO:0007669"/>
    <property type="project" value="UniProtKB-KW"/>
</dbReference>
<dbReference type="GO" id="GO:0001731">
    <property type="term" value="P:formation of translation preinitiation complex"/>
    <property type="evidence" value="ECO:0007669"/>
    <property type="project" value="InterPro"/>
</dbReference>
<dbReference type="CDD" id="cd11608">
    <property type="entry name" value="eIF2D_C"/>
    <property type="match status" value="1"/>
</dbReference>
<dbReference type="CDD" id="cd11610">
    <property type="entry name" value="eIF2D_N"/>
    <property type="match status" value="1"/>
</dbReference>
<dbReference type="CDD" id="cd21156">
    <property type="entry name" value="PUA_eIF2d-like"/>
    <property type="match status" value="1"/>
</dbReference>
<dbReference type="FunFam" id="3.10.400.20:FF:000002">
    <property type="entry name" value="Eukaryotic translation initiation factor 2D"/>
    <property type="match status" value="1"/>
</dbReference>
<dbReference type="FunFam" id="3.30.780.10:FF:000007">
    <property type="entry name" value="Putative eukaryotic translation initiation factor 2d"/>
    <property type="match status" value="1"/>
</dbReference>
<dbReference type="Gene3D" id="3.10.400.20">
    <property type="match status" value="1"/>
</dbReference>
<dbReference type="Gene3D" id="3.30.780.10">
    <property type="entry name" value="SUI1-like domain"/>
    <property type="match status" value="1"/>
</dbReference>
<dbReference type="InterPro" id="IPR039757">
    <property type="entry name" value="EIF2D"/>
</dbReference>
<dbReference type="InterPro" id="IPR048247">
    <property type="entry name" value="eIF2D_N"/>
</dbReference>
<dbReference type="InterPro" id="IPR039759">
    <property type="entry name" value="eIF2D_SUI1"/>
</dbReference>
<dbReference type="InterPro" id="IPR041366">
    <property type="entry name" value="Pre-PUA"/>
</dbReference>
<dbReference type="InterPro" id="IPR002478">
    <property type="entry name" value="PUA"/>
</dbReference>
<dbReference type="InterPro" id="IPR015947">
    <property type="entry name" value="PUA-like_sf"/>
</dbReference>
<dbReference type="InterPro" id="IPR048248">
    <property type="entry name" value="PUA_eIF2d-like"/>
</dbReference>
<dbReference type="InterPro" id="IPR001950">
    <property type="entry name" value="SUI1"/>
</dbReference>
<dbReference type="InterPro" id="IPR036877">
    <property type="entry name" value="SUI1_dom_sf"/>
</dbReference>
<dbReference type="InterPro" id="IPR036885">
    <property type="entry name" value="SWIB_MDM2_dom_sf"/>
</dbReference>
<dbReference type="InterPro" id="IPR003121">
    <property type="entry name" value="SWIB_MDM2_domain"/>
</dbReference>
<dbReference type="InterPro" id="IPR004521">
    <property type="entry name" value="Uncharacterised_CHP00451"/>
</dbReference>
<dbReference type="NCBIfam" id="TIGR00451">
    <property type="entry name" value="unchar_dom_2"/>
    <property type="match status" value="1"/>
</dbReference>
<dbReference type="PANTHER" id="PTHR12217">
    <property type="entry name" value="EUKARYOTIC TRANSLATION INITIATION FACTOR 2D"/>
    <property type="match status" value="1"/>
</dbReference>
<dbReference type="PANTHER" id="PTHR12217:SF4">
    <property type="entry name" value="EUKARYOTIC TRANSLATION INITIATION FACTOR 2D"/>
    <property type="match status" value="1"/>
</dbReference>
<dbReference type="Pfam" id="PF17832">
    <property type="entry name" value="Pre-PUA"/>
    <property type="match status" value="1"/>
</dbReference>
<dbReference type="Pfam" id="PF01253">
    <property type="entry name" value="SUI1"/>
    <property type="match status" value="1"/>
</dbReference>
<dbReference type="Pfam" id="PF25304">
    <property type="entry name" value="WH_eIF2D"/>
    <property type="match status" value="1"/>
</dbReference>
<dbReference type="SMART" id="SM00359">
    <property type="entry name" value="PUA"/>
    <property type="match status" value="1"/>
</dbReference>
<dbReference type="SUPFAM" id="SSF55159">
    <property type="entry name" value="eIF1-like"/>
    <property type="match status" value="1"/>
</dbReference>
<dbReference type="SUPFAM" id="SSF88697">
    <property type="entry name" value="PUA domain-like"/>
    <property type="match status" value="1"/>
</dbReference>
<dbReference type="SUPFAM" id="SSF47592">
    <property type="entry name" value="SWIB/MDM2 domain"/>
    <property type="match status" value="1"/>
</dbReference>
<dbReference type="PROSITE" id="PS50890">
    <property type="entry name" value="PUA"/>
    <property type="match status" value="1"/>
</dbReference>
<dbReference type="PROSITE" id="PS50296">
    <property type="entry name" value="SUI1"/>
    <property type="match status" value="1"/>
</dbReference>
<dbReference type="PROSITE" id="PS51925">
    <property type="entry name" value="SWIB_MDM2"/>
    <property type="match status" value="1"/>
</dbReference>
<name>EIF2D_RABIT</name>
<organism>
    <name type="scientific">Oryctolagus cuniculus</name>
    <name type="common">Rabbit</name>
    <dbReference type="NCBI Taxonomy" id="9986"/>
    <lineage>
        <taxon>Eukaryota</taxon>
        <taxon>Metazoa</taxon>
        <taxon>Chordata</taxon>
        <taxon>Craniata</taxon>
        <taxon>Vertebrata</taxon>
        <taxon>Euteleostomi</taxon>
        <taxon>Mammalia</taxon>
        <taxon>Eutheria</taxon>
        <taxon>Euarchontoglires</taxon>
        <taxon>Glires</taxon>
        <taxon>Lagomorpha</taxon>
        <taxon>Leporidae</taxon>
        <taxon>Oryctolagus</taxon>
    </lineage>
</organism>
<keyword id="KW-0007">Acetylation</keyword>
<keyword id="KW-0963">Cytoplasm</keyword>
<keyword id="KW-0396">Initiation factor</keyword>
<keyword id="KW-0597">Phosphoprotein</keyword>
<keyword id="KW-0648">Protein biosynthesis</keyword>
<keyword id="KW-1185">Reference proteome</keyword>
<sequence length="566" mass="62209">MFAKAFRVKSNTAIKGSDRRKLRADVAAAFPTLGTDQVSELVPGKEELNTVKLYAHRGDAVTVYVSGGNPILFELEKNLYPTVYMLWSHPDLLPTFTTWPLVLEKLVGGADLMLPGLVVPPAGLPQVQKGDLCAIALVGNRAPVAIGVAAMSTEEMLTSGLKGRGFSVLHTYQDHLWRSGDKSSPPSIAPLVVDPADLNDDKESVQVNPVLQGEEEGNGETALSEATSAGGQDQDPTDSRTLQEQMDELLQQCFLHALKCRIQKADLPLLTSTLLGSHMFSCCPEGHQLDIKKSSYKKLSKFLQHMQQEQIVQVKELSRGVESVVAVDWRHPRITSFVIPEPSLTSQSVQEGSREQPYRPPDIKPLYCVPASMTLLFQESGHKKGSVLEGSEVRAIIINYAKKNDLVDADNKNLVKLDPVLCDCLLEKHEQHSIMKLPWDSLVTRCLEKLQPAYQVTFPGQEPVVKKGKICPIDITLAQRASNKKVTVVRNLEAYGLDPGSVAATLQQRCQASTTVTPAPGAKDSLQVQIQGNQVHHLGRLLLEEYHLPRKYIQGLEHAPKASKKK</sequence>
<gene>
    <name type="primary">EIF2D</name>
    <name type="synonym">LGTN</name>
</gene>
<accession>P0CL18</accession>
<proteinExistence type="evidence at protein level"/>
<evidence type="ECO:0000250" key="1"/>
<evidence type="ECO:0000250" key="2">
    <source>
        <dbReference type="UniProtKB" id="P41214"/>
    </source>
</evidence>
<evidence type="ECO:0000255" key="3">
    <source>
        <dbReference type="PROSITE-ProRule" id="PRU00161"/>
    </source>
</evidence>
<evidence type="ECO:0000255" key="4">
    <source>
        <dbReference type="PROSITE-ProRule" id="PRU00200"/>
    </source>
</evidence>
<evidence type="ECO:0000255" key="5">
    <source>
        <dbReference type="PROSITE-ProRule" id="PRU01273"/>
    </source>
</evidence>
<evidence type="ECO:0000256" key="6">
    <source>
        <dbReference type="SAM" id="MobiDB-lite"/>
    </source>
</evidence>
<evidence type="ECO:0000269" key="7">
    <source>
    </source>
</evidence>
<evidence type="ECO:0000305" key="8"/>